<feature type="chain" id="PRO_1000010870" description="Elongation factor P">
    <location>
        <begin position="1"/>
        <end position="186"/>
    </location>
</feature>
<proteinExistence type="inferred from homology"/>
<comment type="function">
    <text evidence="1">Involved in peptide bond synthesis. Stimulates efficient translation and peptide-bond synthesis on native or reconstituted 70S ribosomes in vitro. Probably functions indirectly by altering the affinity of the ribosome for aminoacyl-tRNA, thus increasing their reactivity as acceptors for peptidyl transferase.</text>
</comment>
<comment type="pathway">
    <text evidence="1">Protein biosynthesis; polypeptide chain elongation.</text>
</comment>
<comment type="subcellular location">
    <subcellularLocation>
        <location evidence="1">Cytoplasm</location>
    </subcellularLocation>
</comment>
<comment type="similarity">
    <text evidence="1">Belongs to the elongation factor P family.</text>
</comment>
<keyword id="KW-0963">Cytoplasm</keyword>
<keyword id="KW-0251">Elongation factor</keyword>
<keyword id="KW-0648">Protein biosynthesis</keyword>
<organism>
    <name type="scientific">Streptococcus agalactiae serotype Ia (strain ATCC 27591 / A909 / CDC SS700)</name>
    <dbReference type="NCBI Taxonomy" id="205921"/>
    <lineage>
        <taxon>Bacteria</taxon>
        <taxon>Bacillati</taxon>
        <taxon>Bacillota</taxon>
        <taxon>Bacilli</taxon>
        <taxon>Lactobacillales</taxon>
        <taxon>Streptococcaceae</taxon>
        <taxon>Streptococcus</taxon>
    </lineage>
</organism>
<reference key="1">
    <citation type="journal article" date="2005" name="Proc. Natl. Acad. Sci. U.S.A.">
        <title>Genome analysis of multiple pathogenic isolates of Streptococcus agalactiae: implications for the microbial 'pan-genome'.</title>
        <authorList>
            <person name="Tettelin H."/>
            <person name="Masignani V."/>
            <person name="Cieslewicz M.J."/>
            <person name="Donati C."/>
            <person name="Medini D."/>
            <person name="Ward N.L."/>
            <person name="Angiuoli S.V."/>
            <person name="Crabtree J."/>
            <person name="Jones A.L."/>
            <person name="Durkin A.S."/>
            <person name="DeBoy R.T."/>
            <person name="Davidsen T.M."/>
            <person name="Mora M."/>
            <person name="Scarselli M."/>
            <person name="Margarit y Ros I."/>
            <person name="Peterson J.D."/>
            <person name="Hauser C.R."/>
            <person name="Sundaram J.P."/>
            <person name="Nelson W.C."/>
            <person name="Madupu R."/>
            <person name="Brinkac L.M."/>
            <person name="Dodson R.J."/>
            <person name="Rosovitz M.J."/>
            <person name="Sullivan S.A."/>
            <person name="Daugherty S.C."/>
            <person name="Haft D.H."/>
            <person name="Selengut J."/>
            <person name="Gwinn M.L."/>
            <person name="Zhou L."/>
            <person name="Zafar N."/>
            <person name="Khouri H."/>
            <person name="Radune D."/>
            <person name="Dimitrov G."/>
            <person name="Watkins K."/>
            <person name="O'Connor K.J."/>
            <person name="Smith S."/>
            <person name="Utterback T.R."/>
            <person name="White O."/>
            <person name="Rubens C.E."/>
            <person name="Grandi G."/>
            <person name="Madoff L.C."/>
            <person name="Kasper D.L."/>
            <person name="Telford J.L."/>
            <person name="Wessels M.R."/>
            <person name="Rappuoli R."/>
            <person name="Fraser C.M."/>
        </authorList>
    </citation>
    <scope>NUCLEOTIDE SEQUENCE [LARGE SCALE GENOMIC DNA]</scope>
    <source>
        <strain>ATCC 27591 / A909 / CDC SS700</strain>
    </source>
</reference>
<dbReference type="EMBL" id="CP000114">
    <property type="protein sequence ID" value="ABA44565.1"/>
    <property type="molecule type" value="Genomic_DNA"/>
</dbReference>
<dbReference type="RefSeq" id="WP_000568636.1">
    <property type="nucleotide sequence ID" value="NC_007432.1"/>
</dbReference>
<dbReference type="SMR" id="Q3JZJ4"/>
<dbReference type="GeneID" id="66886541"/>
<dbReference type="KEGG" id="sak:SAK_1707"/>
<dbReference type="HOGENOM" id="CLU_074944_3_0_9"/>
<dbReference type="UniPathway" id="UPA00345"/>
<dbReference type="GO" id="GO:0005737">
    <property type="term" value="C:cytoplasm"/>
    <property type="evidence" value="ECO:0007669"/>
    <property type="project" value="UniProtKB-SubCell"/>
</dbReference>
<dbReference type="GO" id="GO:0003746">
    <property type="term" value="F:translation elongation factor activity"/>
    <property type="evidence" value="ECO:0007669"/>
    <property type="project" value="UniProtKB-UniRule"/>
</dbReference>
<dbReference type="GO" id="GO:0043043">
    <property type="term" value="P:peptide biosynthetic process"/>
    <property type="evidence" value="ECO:0007669"/>
    <property type="project" value="InterPro"/>
</dbReference>
<dbReference type="CDD" id="cd04470">
    <property type="entry name" value="S1_EF-P_repeat_1"/>
    <property type="match status" value="1"/>
</dbReference>
<dbReference type="CDD" id="cd05794">
    <property type="entry name" value="S1_EF-P_repeat_2"/>
    <property type="match status" value="1"/>
</dbReference>
<dbReference type="FunFam" id="2.30.30.30:FF:000003">
    <property type="entry name" value="Elongation factor P"/>
    <property type="match status" value="1"/>
</dbReference>
<dbReference type="FunFam" id="2.40.50.140:FF:000004">
    <property type="entry name" value="Elongation factor P"/>
    <property type="match status" value="1"/>
</dbReference>
<dbReference type="FunFam" id="2.40.50.140:FF:000009">
    <property type="entry name" value="Elongation factor P"/>
    <property type="match status" value="1"/>
</dbReference>
<dbReference type="Gene3D" id="2.30.30.30">
    <property type="match status" value="1"/>
</dbReference>
<dbReference type="Gene3D" id="2.40.50.140">
    <property type="entry name" value="Nucleic acid-binding proteins"/>
    <property type="match status" value="2"/>
</dbReference>
<dbReference type="HAMAP" id="MF_00141">
    <property type="entry name" value="EF_P"/>
    <property type="match status" value="1"/>
</dbReference>
<dbReference type="InterPro" id="IPR015365">
    <property type="entry name" value="Elong-fact-P_C"/>
</dbReference>
<dbReference type="InterPro" id="IPR012340">
    <property type="entry name" value="NA-bd_OB-fold"/>
</dbReference>
<dbReference type="InterPro" id="IPR014722">
    <property type="entry name" value="Rib_uL2_dom2"/>
</dbReference>
<dbReference type="InterPro" id="IPR020599">
    <property type="entry name" value="Transl_elong_fac_P/YeiP"/>
</dbReference>
<dbReference type="InterPro" id="IPR013185">
    <property type="entry name" value="Transl_elong_KOW-like"/>
</dbReference>
<dbReference type="InterPro" id="IPR001059">
    <property type="entry name" value="Transl_elong_P/YeiP_cen"/>
</dbReference>
<dbReference type="InterPro" id="IPR013852">
    <property type="entry name" value="Transl_elong_P/YeiP_CS"/>
</dbReference>
<dbReference type="InterPro" id="IPR011768">
    <property type="entry name" value="Transl_elongation_fac_P"/>
</dbReference>
<dbReference type="InterPro" id="IPR008991">
    <property type="entry name" value="Translation_prot_SH3-like_sf"/>
</dbReference>
<dbReference type="NCBIfam" id="TIGR00038">
    <property type="entry name" value="efp"/>
    <property type="match status" value="1"/>
</dbReference>
<dbReference type="NCBIfam" id="NF001810">
    <property type="entry name" value="PRK00529.1"/>
    <property type="match status" value="1"/>
</dbReference>
<dbReference type="PANTHER" id="PTHR30053">
    <property type="entry name" value="ELONGATION FACTOR P"/>
    <property type="match status" value="1"/>
</dbReference>
<dbReference type="PANTHER" id="PTHR30053:SF12">
    <property type="entry name" value="ELONGATION FACTOR P (EF-P) FAMILY PROTEIN"/>
    <property type="match status" value="1"/>
</dbReference>
<dbReference type="Pfam" id="PF01132">
    <property type="entry name" value="EFP"/>
    <property type="match status" value="1"/>
</dbReference>
<dbReference type="Pfam" id="PF08207">
    <property type="entry name" value="EFP_N"/>
    <property type="match status" value="1"/>
</dbReference>
<dbReference type="Pfam" id="PF09285">
    <property type="entry name" value="Elong-fact-P_C"/>
    <property type="match status" value="1"/>
</dbReference>
<dbReference type="PIRSF" id="PIRSF005901">
    <property type="entry name" value="EF-P"/>
    <property type="match status" value="1"/>
</dbReference>
<dbReference type="SMART" id="SM01185">
    <property type="entry name" value="EFP"/>
    <property type="match status" value="1"/>
</dbReference>
<dbReference type="SMART" id="SM00841">
    <property type="entry name" value="Elong-fact-P_C"/>
    <property type="match status" value="1"/>
</dbReference>
<dbReference type="SUPFAM" id="SSF50249">
    <property type="entry name" value="Nucleic acid-binding proteins"/>
    <property type="match status" value="2"/>
</dbReference>
<dbReference type="SUPFAM" id="SSF50104">
    <property type="entry name" value="Translation proteins SH3-like domain"/>
    <property type="match status" value="1"/>
</dbReference>
<dbReference type="PROSITE" id="PS01275">
    <property type="entry name" value="EFP"/>
    <property type="match status" value="1"/>
</dbReference>
<accession>Q3JZJ4</accession>
<name>EFP_STRA1</name>
<sequence length="186" mass="20685">MIEASKLKAGMTFETADGKLIRVLEASHHKPGKGNTIMRMKLRDVRTGSTFDTSYRPEEKFEQAIIETVPAQYLYKMDDTAYFMNNETYDQYEIPTVNIENELLYILENSEVKIQFYGTEVIGVQIPTTVELTVAETQPSIKGATVTGSGKPATMETGLVVNVPDFIEAGQKLVINTAEGTYVSRA</sequence>
<gene>
    <name evidence="1" type="primary">efp</name>
    <name type="ordered locus">SAK_1707</name>
</gene>
<protein>
    <recommendedName>
        <fullName evidence="1">Elongation factor P</fullName>
        <shortName evidence="1">EF-P</shortName>
    </recommendedName>
</protein>
<evidence type="ECO:0000255" key="1">
    <source>
        <dbReference type="HAMAP-Rule" id="MF_00141"/>
    </source>
</evidence>